<evidence type="ECO:0000255" key="1">
    <source>
        <dbReference type="HAMAP-Rule" id="MF_00268"/>
    </source>
</evidence>
<accession>Q30YS6</accession>
<dbReference type="EMBL" id="CP000112">
    <property type="protein sequence ID" value="ABB39170.1"/>
    <property type="molecule type" value="Genomic_DNA"/>
</dbReference>
<dbReference type="RefSeq" id="WP_011368246.1">
    <property type="nucleotide sequence ID" value="NC_007519.1"/>
</dbReference>
<dbReference type="SMR" id="Q30YS6"/>
<dbReference type="STRING" id="207559.Dde_2373"/>
<dbReference type="KEGG" id="dde:Dde_2373"/>
<dbReference type="eggNOG" id="COG0468">
    <property type="taxonomic scope" value="Bacteria"/>
</dbReference>
<dbReference type="HOGENOM" id="CLU_040469_3_2_7"/>
<dbReference type="Proteomes" id="UP000002710">
    <property type="component" value="Chromosome"/>
</dbReference>
<dbReference type="GO" id="GO:0005829">
    <property type="term" value="C:cytosol"/>
    <property type="evidence" value="ECO:0007669"/>
    <property type="project" value="TreeGrafter"/>
</dbReference>
<dbReference type="GO" id="GO:0005524">
    <property type="term" value="F:ATP binding"/>
    <property type="evidence" value="ECO:0007669"/>
    <property type="project" value="UniProtKB-UniRule"/>
</dbReference>
<dbReference type="GO" id="GO:0016887">
    <property type="term" value="F:ATP hydrolysis activity"/>
    <property type="evidence" value="ECO:0007669"/>
    <property type="project" value="InterPro"/>
</dbReference>
<dbReference type="GO" id="GO:0140664">
    <property type="term" value="F:ATP-dependent DNA damage sensor activity"/>
    <property type="evidence" value="ECO:0007669"/>
    <property type="project" value="InterPro"/>
</dbReference>
<dbReference type="GO" id="GO:0003684">
    <property type="term" value="F:damaged DNA binding"/>
    <property type="evidence" value="ECO:0007669"/>
    <property type="project" value="UniProtKB-UniRule"/>
</dbReference>
<dbReference type="GO" id="GO:0003697">
    <property type="term" value="F:single-stranded DNA binding"/>
    <property type="evidence" value="ECO:0007669"/>
    <property type="project" value="UniProtKB-UniRule"/>
</dbReference>
<dbReference type="GO" id="GO:0006310">
    <property type="term" value="P:DNA recombination"/>
    <property type="evidence" value="ECO:0007669"/>
    <property type="project" value="UniProtKB-UniRule"/>
</dbReference>
<dbReference type="GO" id="GO:0006281">
    <property type="term" value="P:DNA repair"/>
    <property type="evidence" value="ECO:0007669"/>
    <property type="project" value="UniProtKB-UniRule"/>
</dbReference>
<dbReference type="GO" id="GO:0009432">
    <property type="term" value="P:SOS response"/>
    <property type="evidence" value="ECO:0007669"/>
    <property type="project" value="UniProtKB-UniRule"/>
</dbReference>
<dbReference type="CDD" id="cd00983">
    <property type="entry name" value="RecA"/>
    <property type="match status" value="1"/>
</dbReference>
<dbReference type="FunFam" id="3.40.50.300:FF:000087">
    <property type="entry name" value="Recombinase RecA"/>
    <property type="match status" value="1"/>
</dbReference>
<dbReference type="Gene3D" id="3.40.50.300">
    <property type="entry name" value="P-loop containing nucleotide triphosphate hydrolases"/>
    <property type="match status" value="1"/>
</dbReference>
<dbReference type="HAMAP" id="MF_00268">
    <property type="entry name" value="RecA"/>
    <property type="match status" value="1"/>
</dbReference>
<dbReference type="InterPro" id="IPR003593">
    <property type="entry name" value="AAA+_ATPase"/>
</dbReference>
<dbReference type="InterPro" id="IPR013765">
    <property type="entry name" value="DNA_recomb/repair_RecA"/>
</dbReference>
<dbReference type="InterPro" id="IPR027417">
    <property type="entry name" value="P-loop_NTPase"/>
</dbReference>
<dbReference type="InterPro" id="IPR049261">
    <property type="entry name" value="RecA-like_C"/>
</dbReference>
<dbReference type="InterPro" id="IPR049428">
    <property type="entry name" value="RecA-like_N"/>
</dbReference>
<dbReference type="InterPro" id="IPR020588">
    <property type="entry name" value="RecA_ATP-bd"/>
</dbReference>
<dbReference type="InterPro" id="IPR023400">
    <property type="entry name" value="RecA_C_sf"/>
</dbReference>
<dbReference type="InterPro" id="IPR020587">
    <property type="entry name" value="RecA_monomer-monomer_interface"/>
</dbReference>
<dbReference type="NCBIfam" id="TIGR02012">
    <property type="entry name" value="tigrfam_recA"/>
    <property type="match status" value="1"/>
</dbReference>
<dbReference type="PANTHER" id="PTHR45900:SF1">
    <property type="entry name" value="MITOCHONDRIAL DNA REPAIR PROTEIN RECA HOMOLOG-RELATED"/>
    <property type="match status" value="1"/>
</dbReference>
<dbReference type="PANTHER" id="PTHR45900">
    <property type="entry name" value="RECA"/>
    <property type="match status" value="1"/>
</dbReference>
<dbReference type="Pfam" id="PF00154">
    <property type="entry name" value="RecA"/>
    <property type="match status" value="1"/>
</dbReference>
<dbReference type="Pfam" id="PF21096">
    <property type="entry name" value="RecA_C"/>
    <property type="match status" value="1"/>
</dbReference>
<dbReference type="PRINTS" id="PR00142">
    <property type="entry name" value="RECA"/>
</dbReference>
<dbReference type="SMART" id="SM00382">
    <property type="entry name" value="AAA"/>
    <property type="match status" value="1"/>
</dbReference>
<dbReference type="SUPFAM" id="SSF52540">
    <property type="entry name" value="P-loop containing nucleoside triphosphate hydrolases"/>
    <property type="match status" value="1"/>
</dbReference>
<dbReference type="SUPFAM" id="SSF54752">
    <property type="entry name" value="RecA protein, C-terminal domain"/>
    <property type="match status" value="1"/>
</dbReference>
<dbReference type="PROSITE" id="PS50162">
    <property type="entry name" value="RECA_2"/>
    <property type="match status" value="1"/>
</dbReference>
<dbReference type="PROSITE" id="PS50163">
    <property type="entry name" value="RECA_3"/>
    <property type="match status" value="1"/>
</dbReference>
<organism>
    <name type="scientific">Oleidesulfovibrio alaskensis (strain ATCC BAA-1058 / DSM 17464 / G20)</name>
    <name type="common">Desulfovibrio alaskensis</name>
    <dbReference type="NCBI Taxonomy" id="207559"/>
    <lineage>
        <taxon>Bacteria</taxon>
        <taxon>Pseudomonadati</taxon>
        <taxon>Thermodesulfobacteriota</taxon>
        <taxon>Desulfovibrionia</taxon>
        <taxon>Desulfovibrionales</taxon>
        <taxon>Desulfovibrionaceae</taxon>
        <taxon>Oleidesulfovibrio</taxon>
    </lineage>
</organism>
<gene>
    <name evidence="1" type="primary">recA</name>
    <name type="ordered locus">Dde_2373</name>
</gene>
<protein>
    <recommendedName>
        <fullName evidence="1">Protein RecA</fullName>
    </recommendedName>
    <alternativeName>
        <fullName evidence="1">Recombinase A</fullName>
    </alternativeName>
</protein>
<reference key="1">
    <citation type="journal article" date="2011" name="J. Bacteriol.">
        <title>Complete genome sequence and updated annotation of Desulfovibrio alaskensis G20.</title>
        <authorList>
            <person name="Hauser L.J."/>
            <person name="Land M.L."/>
            <person name="Brown S.D."/>
            <person name="Larimer F."/>
            <person name="Keller K.L."/>
            <person name="Rapp-Giles B.J."/>
            <person name="Price M.N."/>
            <person name="Lin M."/>
            <person name="Bruce D.C."/>
            <person name="Detter J.C."/>
            <person name="Tapia R."/>
            <person name="Han C.S."/>
            <person name="Goodwin L.A."/>
            <person name="Cheng J.F."/>
            <person name="Pitluck S."/>
            <person name="Copeland A."/>
            <person name="Lucas S."/>
            <person name="Nolan M."/>
            <person name="Lapidus A.L."/>
            <person name="Palumbo A.V."/>
            <person name="Wall J.D."/>
        </authorList>
    </citation>
    <scope>NUCLEOTIDE SEQUENCE [LARGE SCALE GENOMIC DNA]</scope>
    <source>
        <strain>ATCC BAA-1058 / DSM 17464 / G20</strain>
    </source>
</reference>
<name>RECA_OLEA2</name>
<sequence length="351" mass="38373">MSKKTSLTPEEMRREALNTALSTIERKYGSGSVMKLSDDAHTNVAVIPSGSIGLDLALGVGGIPRGRVTEIYGPESSGKTTLALHMIAECQKQGGTAAFIDAEHALDINYARRLGVKTDEMLISQPDYGEQALDIADMLVRSNAVDVVVIDSVAALIPQSELEGNMGETQVGSQARLMSHAMRKLTGTIHKSRTSVIFINQIRMKIGTMGYGSPETTTGGNALKFYCSVRIDVRKIQTLKDKEEVYGNRVRVKIVKNKVAPPFREAQFDILYGQGVSRTGELIDLGVETGIVEKSGAWYAFGSERLGQGKENVRQMLQENTTLREAIEQKLLEHLGMREPVQSADEAEKQD</sequence>
<proteinExistence type="inferred from homology"/>
<feature type="chain" id="PRO_1000047910" description="Protein RecA">
    <location>
        <begin position="1"/>
        <end position="351"/>
    </location>
</feature>
<feature type="binding site" evidence="1">
    <location>
        <begin position="73"/>
        <end position="80"/>
    </location>
    <ligand>
        <name>ATP</name>
        <dbReference type="ChEBI" id="CHEBI:30616"/>
    </ligand>
</feature>
<keyword id="KW-0067">ATP-binding</keyword>
<keyword id="KW-0963">Cytoplasm</keyword>
<keyword id="KW-0227">DNA damage</keyword>
<keyword id="KW-0233">DNA recombination</keyword>
<keyword id="KW-0234">DNA repair</keyword>
<keyword id="KW-0238">DNA-binding</keyword>
<keyword id="KW-0547">Nucleotide-binding</keyword>
<keyword id="KW-1185">Reference proteome</keyword>
<keyword id="KW-0742">SOS response</keyword>
<comment type="function">
    <text evidence="1">Can catalyze the hydrolysis of ATP in the presence of single-stranded DNA, the ATP-dependent uptake of single-stranded DNA by duplex DNA, and the ATP-dependent hybridization of homologous single-stranded DNAs. It interacts with LexA causing its activation and leading to its autocatalytic cleavage.</text>
</comment>
<comment type="subcellular location">
    <subcellularLocation>
        <location evidence="1">Cytoplasm</location>
    </subcellularLocation>
</comment>
<comment type="similarity">
    <text evidence="1">Belongs to the RecA family.</text>
</comment>